<keyword id="KW-0903">Direct protein sequencing</keyword>
<keyword id="KW-1015">Disulfide bond</keyword>
<keyword id="KW-1199">Hemostasis impairing toxin</keyword>
<keyword id="KW-1201">Platelet aggregation inhibiting toxin</keyword>
<keyword id="KW-0964">Secreted</keyword>
<keyword id="KW-0732">Signal</keyword>
<keyword id="KW-0800">Toxin</keyword>
<feature type="signal peptide" evidence="2">
    <location>
        <begin position="1"/>
        <end position="23"/>
    </location>
</feature>
<feature type="chain" id="PRO_0000422430" description="Snaclec jerdonibitin subunit alpha">
    <location>
        <begin position="24"/>
        <end position="156"/>
    </location>
</feature>
<feature type="domain" description="C-type lectin" evidence="1">
    <location>
        <begin position="32"/>
        <end position="151"/>
    </location>
</feature>
<feature type="disulfide bond" evidence="1">
    <location>
        <begin position="25"/>
        <end position="36"/>
    </location>
</feature>
<feature type="disulfide bond" evidence="1">
    <location>
        <begin position="53"/>
        <end position="150"/>
    </location>
</feature>
<feature type="disulfide bond" description="Interchain (with C-98 in subunit beta)" evidence="1">
    <location>
        <position position="102"/>
    </location>
</feature>
<feature type="disulfide bond" evidence="1">
    <location>
        <begin position="125"/>
        <end position="142"/>
    </location>
</feature>
<comment type="function">
    <text evidence="2">Snaclec that dose-dependently inhibits platelet aggregation induced by ristocetin or low-dose thrombin, but not by high-dose thrombin. Binds to GPIbalpha (GP1BA). In vivo, also dose-dependently induces thrombocytopenia of mice and platelet counts remains at very low level even after 18 hours intravenous injection.</text>
</comment>
<comment type="subunit">
    <text evidence="2">Heterodimer of subunits alpha and beta; disulfide-linked.</text>
</comment>
<comment type="subcellular location">
    <subcellularLocation>
        <location>Secreted</location>
    </subcellularLocation>
</comment>
<comment type="tissue specificity">
    <text>Expressed by the venom gland.</text>
</comment>
<comment type="miscellaneous">
    <text evidence="4">Negative results: does not induce platelet aggregation in either platelet rich plasma or washed platelets under high-dose conditions. Does not inhibit platelet aggregation induced by high-dose thrombin. Does not react with polyclonal anti-GPVI and anti-GPIIb antibodies (PubMed:21256857).</text>
</comment>
<comment type="similarity">
    <text evidence="3">Belongs to the snaclec family.</text>
</comment>
<sequence length="156" mass="18146">MGRFIFVSFGLLVVFLSLSGTGADCPFDWSSFRQYCYRVFKQLKTWEDAERFCSEQVKGARLVSIESYREAVFVAQLLSENIKATKSHVWIGLSVENKGQQCSSKWSDGSSVSYENLVKPFSKKCFVLKKESEFHKWFNVYCGQQHLFMCKFLRPR</sequence>
<evidence type="ECO:0000255" key="1">
    <source>
        <dbReference type="PROSITE-ProRule" id="PRU00040"/>
    </source>
</evidence>
<evidence type="ECO:0000269" key="2">
    <source>
    </source>
</evidence>
<evidence type="ECO:0000305" key="3"/>
<evidence type="ECO:0000305" key="4">
    <source>
    </source>
</evidence>
<accession>D1MGU0</accession>
<proteinExistence type="evidence at protein level"/>
<reference key="1">
    <citation type="journal article" date="2011" name="Toxicon">
        <title>A novel platelet glycoprotein Ib-binding protein with human platelet aggregation-inhibiting activity from Trimeresurus jerdonii venom.</title>
        <authorList>
            <person name="Chen Z."/>
            <person name="Wu J."/>
            <person name="Zhang Y."/>
            <person name="Yang X."/>
            <person name="Yu G."/>
            <person name="Zhu S."/>
            <person name="Lee W."/>
            <person name="Lu Q."/>
            <person name="Zhang Y."/>
        </authorList>
    </citation>
    <scope>NUCLEOTIDE SEQUENCE [MRNA]</scope>
    <scope>PROTEIN SEQUENCE OF 24-44</scope>
    <scope>FUNCTION</scope>
    <scope>SUBUNIT</scope>
    <source>
        <tissue>Venom</tissue>
        <tissue>Venom gland</tissue>
    </source>
</reference>
<protein>
    <recommendedName>
        <fullName>Snaclec jerdonibitin subunit alpha</fullName>
    </recommendedName>
    <alternativeName>
        <fullName>TJ-GPIb-bp subunit alpha</fullName>
    </alternativeName>
</protein>
<organism>
    <name type="scientific">Protobothrops jerdonii</name>
    <name type="common">Jerdon's pitviper</name>
    <name type="synonym">Trimeresurus jerdonii</name>
    <dbReference type="NCBI Taxonomy" id="242841"/>
    <lineage>
        <taxon>Eukaryota</taxon>
        <taxon>Metazoa</taxon>
        <taxon>Chordata</taxon>
        <taxon>Craniata</taxon>
        <taxon>Vertebrata</taxon>
        <taxon>Euteleostomi</taxon>
        <taxon>Lepidosauria</taxon>
        <taxon>Squamata</taxon>
        <taxon>Bifurcata</taxon>
        <taxon>Unidentata</taxon>
        <taxon>Episquamata</taxon>
        <taxon>Toxicofera</taxon>
        <taxon>Serpentes</taxon>
        <taxon>Colubroidea</taxon>
        <taxon>Viperidae</taxon>
        <taxon>Crotalinae</taxon>
        <taxon>Protobothrops</taxon>
    </lineage>
</organism>
<name>SLA_PROJR</name>
<dbReference type="EMBL" id="GU146049">
    <property type="protein sequence ID" value="ACZ34293.1"/>
    <property type="molecule type" value="mRNA"/>
</dbReference>
<dbReference type="SMR" id="D1MGU0"/>
<dbReference type="GO" id="GO:0005576">
    <property type="term" value="C:extracellular region"/>
    <property type="evidence" value="ECO:0000314"/>
    <property type="project" value="UniProtKB"/>
</dbReference>
<dbReference type="GO" id="GO:0044218">
    <property type="term" value="C:other organism cell membrane"/>
    <property type="evidence" value="ECO:0000314"/>
    <property type="project" value="UniProtKB"/>
</dbReference>
<dbReference type="GO" id="GO:0090729">
    <property type="term" value="F:toxin activity"/>
    <property type="evidence" value="ECO:0007669"/>
    <property type="project" value="UniProtKB-KW"/>
</dbReference>
<dbReference type="GO" id="GO:0044477">
    <property type="term" value="P:venom-mediated suppression of platelet aggregation"/>
    <property type="evidence" value="ECO:0000314"/>
    <property type="project" value="UniProtKB"/>
</dbReference>
<dbReference type="FunFam" id="3.10.100.10:FF:000087">
    <property type="entry name" value="Snaclec rhodocetin subunit delta"/>
    <property type="match status" value="1"/>
</dbReference>
<dbReference type="Gene3D" id="3.10.100.10">
    <property type="entry name" value="Mannose-Binding Protein A, subunit A"/>
    <property type="match status" value="1"/>
</dbReference>
<dbReference type="InterPro" id="IPR001304">
    <property type="entry name" value="C-type_lectin-like"/>
</dbReference>
<dbReference type="InterPro" id="IPR016186">
    <property type="entry name" value="C-type_lectin-like/link_sf"/>
</dbReference>
<dbReference type="InterPro" id="IPR018378">
    <property type="entry name" value="C-type_lectin_CS"/>
</dbReference>
<dbReference type="InterPro" id="IPR016187">
    <property type="entry name" value="CTDL_fold"/>
</dbReference>
<dbReference type="InterPro" id="IPR050976">
    <property type="entry name" value="Snaclec"/>
</dbReference>
<dbReference type="PANTHER" id="PTHR22991">
    <property type="entry name" value="PROTEIN CBG13490"/>
    <property type="match status" value="1"/>
</dbReference>
<dbReference type="PANTHER" id="PTHR22991:SF40">
    <property type="entry name" value="PROTEIN CBG13490"/>
    <property type="match status" value="1"/>
</dbReference>
<dbReference type="Pfam" id="PF00059">
    <property type="entry name" value="Lectin_C"/>
    <property type="match status" value="1"/>
</dbReference>
<dbReference type="PRINTS" id="PR01504">
    <property type="entry name" value="PNCREATITSAP"/>
</dbReference>
<dbReference type="SMART" id="SM00034">
    <property type="entry name" value="CLECT"/>
    <property type="match status" value="1"/>
</dbReference>
<dbReference type="SUPFAM" id="SSF56436">
    <property type="entry name" value="C-type lectin-like"/>
    <property type="match status" value="1"/>
</dbReference>
<dbReference type="PROSITE" id="PS00615">
    <property type="entry name" value="C_TYPE_LECTIN_1"/>
    <property type="match status" value="1"/>
</dbReference>
<dbReference type="PROSITE" id="PS50041">
    <property type="entry name" value="C_TYPE_LECTIN_2"/>
    <property type="match status" value="1"/>
</dbReference>